<name>BUT84_GIBZE</name>
<sequence>MPPQQEQDTDSDAIRSYNEESKSETPGCIPDAMLSSDETSNDVASDISPPPDGGWNAWLCTLCGHFLFMNTWGFINSFGIFQTYYTTFLDRDPSDISWIGSIQVFLSFFVGAFVGRYIDSGHLRLVLSCGTILVLIGIFTASLSTQYWQLILSQGICCGLGNGFLVTPAVSVTSTYFAKRRSLAIGISTCGSVTGALVFNSMARQLLPTAGFGWTMRAIGFVQAATLLFVVVAMKTRLPPTKSGRLVEWVAFKQLDYTFFTIGMFFNFWAVFFGYYYIAPYSRDIITPTLTYTQSLNLLLILNGVGVFGRMIANHYADTFGPLELLIPTCLVAAVATFSWIAVDTPTHAYVWTVFYGIIGGSILSLFPAGISCLTTDLSTRGAYIGMNFTVISFATLTGNPIAGAIITAMQGRYYGAQAFMGSSFIVGTAFIVAAKMNHVK</sequence>
<reference key="1">
    <citation type="journal article" date="2007" name="Science">
        <title>The Fusarium graminearum genome reveals a link between localized polymorphism and pathogen specialization.</title>
        <authorList>
            <person name="Cuomo C.A."/>
            <person name="Gueldener U."/>
            <person name="Xu J.-R."/>
            <person name="Trail F."/>
            <person name="Turgeon B.G."/>
            <person name="Di Pietro A."/>
            <person name="Walton J.D."/>
            <person name="Ma L.-J."/>
            <person name="Baker S.E."/>
            <person name="Rep M."/>
            <person name="Adam G."/>
            <person name="Antoniw J."/>
            <person name="Baldwin T."/>
            <person name="Calvo S.E."/>
            <person name="Chang Y.-L."/>
            <person name="DeCaprio D."/>
            <person name="Gale L.R."/>
            <person name="Gnerre S."/>
            <person name="Goswami R.S."/>
            <person name="Hammond-Kosack K."/>
            <person name="Harris L.J."/>
            <person name="Hilburn K."/>
            <person name="Kennell J.C."/>
            <person name="Kroken S."/>
            <person name="Magnuson J.K."/>
            <person name="Mannhaupt G."/>
            <person name="Mauceli E.W."/>
            <person name="Mewes H.-W."/>
            <person name="Mitterbauer R."/>
            <person name="Muehlbauer G."/>
            <person name="Muensterkoetter M."/>
            <person name="Nelson D."/>
            <person name="O'Donnell K."/>
            <person name="Ouellet T."/>
            <person name="Qi W."/>
            <person name="Quesneville H."/>
            <person name="Roncero M.I.G."/>
            <person name="Seong K.-Y."/>
            <person name="Tetko I.V."/>
            <person name="Urban M."/>
            <person name="Waalwijk C."/>
            <person name="Ward T.J."/>
            <person name="Yao J."/>
            <person name="Birren B.W."/>
            <person name="Kistler H.C."/>
        </authorList>
    </citation>
    <scope>NUCLEOTIDE SEQUENCE [LARGE SCALE GENOMIC DNA]</scope>
    <source>
        <strain>ATCC MYA-4620 / CBS 123657 / FGSC 9075 / NRRL 31084 / PH-1</strain>
    </source>
</reference>
<reference key="2">
    <citation type="journal article" date="2010" name="Nature">
        <title>Comparative genomics reveals mobile pathogenicity chromosomes in Fusarium.</title>
        <authorList>
            <person name="Ma L.-J."/>
            <person name="van der Does H.C."/>
            <person name="Borkovich K.A."/>
            <person name="Coleman J.J."/>
            <person name="Daboussi M.-J."/>
            <person name="Di Pietro A."/>
            <person name="Dufresne M."/>
            <person name="Freitag M."/>
            <person name="Grabherr M."/>
            <person name="Henrissat B."/>
            <person name="Houterman P.M."/>
            <person name="Kang S."/>
            <person name="Shim W.-B."/>
            <person name="Woloshuk C."/>
            <person name="Xie X."/>
            <person name="Xu J.-R."/>
            <person name="Antoniw J."/>
            <person name="Baker S.E."/>
            <person name="Bluhm B.H."/>
            <person name="Breakspear A."/>
            <person name="Brown D.W."/>
            <person name="Butchko R.A.E."/>
            <person name="Chapman S."/>
            <person name="Coulson R."/>
            <person name="Coutinho P.M."/>
            <person name="Danchin E.G.J."/>
            <person name="Diener A."/>
            <person name="Gale L.R."/>
            <person name="Gardiner D.M."/>
            <person name="Goff S."/>
            <person name="Hammond-Kosack K.E."/>
            <person name="Hilburn K."/>
            <person name="Hua-Van A."/>
            <person name="Jonkers W."/>
            <person name="Kazan K."/>
            <person name="Kodira C.D."/>
            <person name="Koehrsen M."/>
            <person name="Kumar L."/>
            <person name="Lee Y.-H."/>
            <person name="Li L."/>
            <person name="Manners J.M."/>
            <person name="Miranda-Saavedra D."/>
            <person name="Mukherjee M."/>
            <person name="Park G."/>
            <person name="Park J."/>
            <person name="Park S.-Y."/>
            <person name="Proctor R.H."/>
            <person name="Regev A."/>
            <person name="Ruiz-Roldan M.C."/>
            <person name="Sain D."/>
            <person name="Sakthikumar S."/>
            <person name="Sykes S."/>
            <person name="Schwartz D.C."/>
            <person name="Turgeon B.G."/>
            <person name="Wapinski I."/>
            <person name="Yoder O."/>
            <person name="Young S."/>
            <person name="Zeng Q."/>
            <person name="Zhou S."/>
            <person name="Galagan J."/>
            <person name="Cuomo C.A."/>
            <person name="Kistler H.C."/>
            <person name="Rep M."/>
        </authorList>
    </citation>
    <scope>GENOME REANNOTATION</scope>
    <source>
        <strain>ATCC MYA-4620 / CBS 123657 / FGSC 9075 / NRRL 31084 / PH-1</strain>
    </source>
</reference>
<reference key="3">
    <citation type="journal article" date="2015" name="BMC Genomics">
        <title>The completed genome sequence of the pathogenic ascomycete fungus Fusarium graminearum.</title>
        <authorList>
            <person name="King R."/>
            <person name="Urban M."/>
            <person name="Hammond-Kosack M.C.U."/>
            <person name="Hassani-Pak K."/>
            <person name="Hammond-Kosack K.E."/>
        </authorList>
    </citation>
    <scope>NUCLEOTIDE SEQUENCE [LARGE SCALE GENOMIC DNA]</scope>
    <source>
        <strain>ATCC MYA-4620 / CBS 123657 / FGSC 9075 / NRRL 31084 / PH-1</strain>
    </source>
</reference>
<reference key="4">
    <citation type="journal article" date="2007" name="Fungal Genet. Biol.">
        <title>A novel gene cluster in Fusarium graminearum contains a gene that contributes to butenolide synthesis.</title>
        <authorList>
            <person name="Harris L.J."/>
            <person name="Alexander N.J."/>
            <person name="Saparno A."/>
            <person name="Blackwell B."/>
            <person name="McCormick S.P."/>
            <person name="Desjardins A.E."/>
            <person name="Robert L.S."/>
            <person name="Tinker N."/>
            <person name="Hattori J."/>
            <person name="Piche C."/>
            <person name="Schernthaner J.P."/>
            <person name="Watson R."/>
            <person name="Ouellet T."/>
        </authorList>
    </citation>
    <scope>FUNCTION</scope>
    <scope>INDUCTION</scope>
</reference>
<accession>I1RV24</accession>
<keyword id="KW-0325">Glycoprotein</keyword>
<keyword id="KW-0472">Membrane</keyword>
<keyword id="KW-1185">Reference proteome</keyword>
<keyword id="KW-0812">Transmembrane</keyword>
<keyword id="KW-1133">Transmembrane helix</keyword>
<keyword id="KW-0813">Transport</keyword>
<gene>
    <name type="ORF">FG08084</name>
    <name type="ORF">FGRAMPH1_01T09077</name>
</gene>
<proteinExistence type="evidence at transcript level"/>
<organism>
    <name type="scientific">Gibberella zeae (strain ATCC MYA-4620 / CBS 123657 / FGSC 9075 / NRRL 31084 / PH-1)</name>
    <name type="common">Wheat head blight fungus</name>
    <name type="synonym">Fusarium graminearum</name>
    <dbReference type="NCBI Taxonomy" id="229533"/>
    <lineage>
        <taxon>Eukaryota</taxon>
        <taxon>Fungi</taxon>
        <taxon>Dikarya</taxon>
        <taxon>Ascomycota</taxon>
        <taxon>Pezizomycotina</taxon>
        <taxon>Sordariomycetes</taxon>
        <taxon>Hypocreomycetidae</taxon>
        <taxon>Hypocreales</taxon>
        <taxon>Nectriaceae</taxon>
        <taxon>Fusarium</taxon>
    </lineage>
</organism>
<feature type="chain" id="PRO_0000450729" description="MFS-type transporter">
    <location>
        <begin position="1"/>
        <end position="441"/>
    </location>
</feature>
<feature type="transmembrane region" description="Helical" evidence="1">
    <location>
        <begin position="61"/>
        <end position="81"/>
    </location>
</feature>
<feature type="transmembrane region" description="Helical" evidence="1">
    <location>
        <begin position="95"/>
        <end position="115"/>
    </location>
</feature>
<feature type="transmembrane region" description="Helical" evidence="1">
    <location>
        <begin position="125"/>
        <end position="145"/>
    </location>
</feature>
<feature type="transmembrane region" description="Helical" evidence="1">
    <location>
        <begin position="150"/>
        <end position="170"/>
    </location>
</feature>
<feature type="transmembrane region" description="Helical" evidence="1">
    <location>
        <begin position="183"/>
        <end position="203"/>
    </location>
</feature>
<feature type="transmembrane region" description="Helical" evidence="1">
    <location>
        <begin position="212"/>
        <end position="232"/>
    </location>
</feature>
<feature type="transmembrane region" description="Helical" evidence="1">
    <location>
        <begin position="259"/>
        <end position="279"/>
    </location>
</feature>
<feature type="transmembrane region" description="Helical" evidence="1">
    <location>
        <begin position="289"/>
        <end position="309"/>
    </location>
</feature>
<feature type="transmembrane region" description="Helical" evidence="1">
    <location>
        <begin position="323"/>
        <end position="343"/>
    </location>
</feature>
<feature type="transmembrane region" description="Helical" evidence="1">
    <location>
        <begin position="351"/>
        <end position="371"/>
    </location>
</feature>
<feature type="transmembrane region" description="Helical" evidence="1">
    <location>
        <begin position="389"/>
        <end position="409"/>
    </location>
</feature>
<feature type="transmembrane region" description="Helical" evidence="1">
    <location>
        <begin position="415"/>
        <end position="435"/>
    </location>
</feature>
<feature type="region of interest" description="Disordered" evidence="3">
    <location>
        <begin position="1"/>
        <end position="47"/>
    </location>
</feature>
<feature type="glycosylation site" description="N-linked (GlcNAc...) asparagine" evidence="2">
    <location>
        <position position="388"/>
    </location>
</feature>
<evidence type="ECO:0000255" key="1"/>
<evidence type="ECO:0000255" key="2">
    <source>
        <dbReference type="PROSITE-ProRule" id="PRU00498"/>
    </source>
</evidence>
<evidence type="ECO:0000256" key="3">
    <source>
        <dbReference type="SAM" id="MobiDB-lite"/>
    </source>
</evidence>
<evidence type="ECO:0000269" key="4">
    <source>
    </source>
</evidence>
<evidence type="ECO:0000303" key="5">
    <source>
    </source>
</evidence>
<evidence type="ECO:0000305" key="6"/>
<protein>
    <recommendedName>
        <fullName evidence="5">MFS-type transporter</fullName>
    </recommendedName>
    <alternativeName>
        <fullName evidence="5">Butenolide biosynthesis cluster protein FG08084</fullName>
    </alternativeName>
</protein>
<dbReference type="EMBL" id="HG970333">
    <property type="protein sequence ID" value="CEF76341.1"/>
    <property type="molecule type" value="Genomic_DNA"/>
</dbReference>
<dbReference type="RefSeq" id="XP_011320738.1">
    <property type="nucleotide sequence ID" value="XM_011322436.1"/>
</dbReference>
<dbReference type="SMR" id="I1RV24"/>
<dbReference type="STRING" id="229533.I1RV24"/>
<dbReference type="KEGG" id="fgr:FGSG_08084"/>
<dbReference type="VEuPathDB" id="FungiDB:FGRAMPH1_01G09077"/>
<dbReference type="eggNOG" id="KOG2504">
    <property type="taxonomic scope" value="Eukaryota"/>
</dbReference>
<dbReference type="HOGENOM" id="CLU_001265_1_1_1"/>
<dbReference type="InParanoid" id="I1RV24"/>
<dbReference type="OrthoDB" id="118323at110618"/>
<dbReference type="Proteomes" id="UP000070720">
    <property type="component" value="Chromosome 2"/>
</dbReference>
<dbReference type="GO" id="GO:0016020">
    <property type="term" value="C:membrane"/>
    <property type="evidence" value="ECO:0007669"/>
    <property type="project" value="UniProtKB-SubCell"/>
</dbReference>
<dbReference type="GO" id="GO:0022857">
    <property type="term" value="F:transmembrane transporter activity"/>
    <property type="evidence" value="ECO:0007669"/>
    <property type="project" value="InterPro"/>
</dbReference>
<dbReference type="Gene3D" id="1.20.1250.20">
    <property type="entry name" value="MFS general substrate transporter like domains"/>
    <property type="match status" value="1"/>
</dbReference>
<dbReference type="InterPro" id="IPR011701">
    <property type="entry name" value="MFS"/>
</dbReference>
<dbReference type="InterPro" id="IPR036259">
    <property type="entry name" value="MFS_trans_sf"/>
</dbReference>
<dbReference type="InterPro" id="IPR050327">
    <property type="entry name" value="Proton-linked_MCT"/>
</dbReference>
<dbReference type="PANTHER" id="PTHR11360:SF130">
    <property type="entry name" value="MAJOR FACILITATOR SUPERFAMILY (MFS) PROFILE DOMAIN-CONTAINING PROTEIN-RELATED"/>
    <property type="match status" value="1"/>
</dbReference>
<dbReference type="PANTHER" id="PTHR11360">
    <property type="entry name" value="MONOCARBOXYLATE TRANSPORTER"/>
    <property type="match status" value="1"/>
</dbReference>
<dbReference type="Pfam" id="PF07690">
    <property type="entry name" value="MFS_1"/>
    <property type="match status" value="1"/>
</dbReference>
<dbReference type="SUPFAM" id="SSF103473">
    <property type="entry name" value="MFS general substrate transporter"/>
    <property type="match status" value="1"/>
</dbReference>
<comment type="function">
    <text evidence="4">MFS-type transporter; part of the gene cluster that mediates the biosynthesis of butenolide, a mycotoxin that shows antibiotic activity but does not seem to play a major role in the spread of head blight in wheat.</text>
</comment>
<comment type="subcellular location">
    <subcellularLocation>
        <location evidence="1">Membrane</location>
        <topology evidence="1">Multi-pass membrane protein</topology>
    </subcellularLocation>
</comment>
<comment type="induction">
    <text evidence="4">Highly expressed under trichothecene-producing conditions.</text>
</comment>
<comment type="similarity">
    <text evidence="6">Belongs to the major facilitator superfamily. Monocarboxylate porter (TC 2.A.1.13) family.</text>
</comment>